<feature type="chain" id="PRO_0000112532" description="Dehydration-responsive element-binding protein 1E">
    <location>
        <begin position="1"/>
        <end position="181"/>
    </location>
</feature>
<feature type="DNA-binding region" description="AP2/ERF" evidence="2">
    <location>
        <begin position="29"/>
        <end position="86"/>
    </location>
</feature>
<feature type="short sequence motif" description="Nuclear localization signal" evidence="1">
    <location>
        <begin position="14"/>
        <end position="26"/>
    </location>
</feature>
<feature type="sequence conflict" description="In Ref. 4; BAD43714." evidence="4" ref="4">
    <original>G</original>
    <variation>R</variation>
    <location>
        <position position="57"/>
    </location>
</feature>
<feature type="sequence conflict" description="In Ref. 4; BAD43714." evidence="4" ref="4">
    <original>S</original>
    <variation>G</variation>
    <location>
        <position position="130"/>
    </location>
</feature>
<gene>
    <name type="primary">DREB1E</name>
    <name type="synonym">DDF1</name>
    <name type="synonym">ERF032</name>
    <name type="ordered locus">At1g63030</name>
    <name type="ORF">F16M19.20</name>
    <name type="ORF">F16P17.20</name>
</gene>
<name>DRE1E_ARATH</name>
<protein>
    <recommendedName>
        <fullName>Dehydration-responsive element-binding protein 1E</fullName>
        <shortName>Protein DREB1E</shortName>
    </recommendedName>
</protein>
<proteinExistence type="evidence at transcript level"/>
<organism>
    <name type="scientific">Arabidopsis thaliana</name>
    <name type="common">Mouse-ear cress</name>
    <dbReference type="NCBI Taxonomy" id="3702"/>
    <lineage>
        <taxon>Eukaryota</taxon>
        <taxon>Viridiplantae</taxon>
        <taxon>Streptophyta</taxon>
        <taxon>Embryophyta</taxon>
        <taxon>Tracheophyta</taxon>
        <taxon>Spermatophyta</taxon>
        <taxon>Magnoliopsida</taxon>
        <taxon>eudicotyledons</taxon>
        <taxon>Gunneridae</taxon>
        <taxon>Pentapetalae</taxon>
        <taxon>rosids</taxon>
        <taxon>malvids</taxon>
        <taxon>Brassicales</taxon>
        <taxon>Brassicaceae</taxon>
        <taxon>Camelineae</taxon>
        <taxon>Arabidopsis</taxon>
    </lineage>
</organism>
<evidence type="ECO:0000255" key="1"/>
<evidence type="ECO:0000255" key="2">
    <source>
        <dbReference type="PROSITE-ProRule" id="PRU00366"/>
    </source>
</evidence>
<evidence type="ECO:0000269" key="3">
    <source>
    </source>
</evidence>
<evidence type="ECO:0000305" key="4"/>
<sequence>MENDDITVAEMKPKKRAGRRIFKETRHPIYRGVRRRDGDKWVCEVREPIHQRRVWLGTYPTADMAARAHDVAVLALRGRSACLNFSDSAWRLPVPASTDPDTIRRTAAEAAEMFRPPEFSTGITVLPSASEFDTSDEGVAGMMMRLAEEPLMSPPRSYIDMNTSVYVDEEMCYEDLSLWSY</sequence>
<accession>Q9SGJ6</accession>
<accession>Q1ECJ2</accession>
<accession>Q680B6</accession>
<accession>Q6J9T4</accession>
<dbReference type="EMBL" id="AY560841">
    <property type="protein sequence ID" value="AAT44908.1"/>
    <property type="molecule type" value="mRNA"/>
</dbReference>
<dbReference type="EMBL" id="AC010795">
    <property type="protein sequence ID" value="AAG51606.1"/>
    <property type="molecule type" value="Genomic_DNA"/>
</dbReference>
<dbReference type="EMBL" id="AC011000">
    <property type="protein sequence ID" value="AAF75816.1"/>
    <property type="molecule type" value="Genomic_DNA"/>
</dbReference>
<dbReference type="EMBL" id="CP002684">
    <property type="protein sequence ID" value="AEE34043.1"/>
    <property type="molecule type" value="Genomic_DNA"/>
</dbReference>
<dbReference type="EMBL" id="CP002684">
    <property type="protein sequence ID" value="AEE34044.1"/>
    <property type="molecule type" value="Genomic_DNA"/>
</dbReference>
<dbReference type="EMBL" id="AK175951">
    <property type="protein sequence ID" value="BAD43714.1"/>
    <property type="molecule type" value="mRNA"/>
</dbReference>
<dbReference type="EMBL" id="BT021917">
    <property type="protein sequence ID" value="AAX49366.1"/>
    <property type="molecule type" value="mRNA"/>
</dbReference>
<dbReference type="EMBL" id="BT025742">
    <property type="protein sequence ID" value="ABF83632.1"/>
    <property type="molecule type" value="mRNA"/>
</dbReference>
<dbReference type="PIR" id="E96655">
    <property type="entry name" value="E96655"/>
</dbReference>
<dbReference type="FunCoup" id="Q9SGJ6">
    <property type="interactions" value="3"/>
</dbReference>
<dbReference type="STRING" id="3702.Q9SGJ6"/>
<dbReference type="PaxDb" id="3702-AT1G63030.2"/>
<dbReference type="EnsemblPlants" id="AT1G63030.1">
    <property type="protein sequence ID" value="AT1G63030.1"/>
    <property type="gene ID" value="AT1G63030"/>
</dbReference>
<dbReference type="EnsemblPlants" id="AT1G63030.2">
    <property type="protein sequence ID" value="AT1G63030.2"/>
    <property type="gene ID" value="AT1G63030"/>
</dbReference>
<dbReference type="GeneID" id="842606"/>
<dbReference type="Gramene" id="AT1G63030.1">
    <property type="protein sequence ID" value="AT1G63030.1"/>
    <property type="gene ID" value="AT1G63030"/>
</dbReference>
<dbReference type="Gramene" id="AT1G63030.2">
    <property type="protein sequence ID" value="AT1G63030.2"/>
    <property type="gene ID" value="AT1G63030"/>
</dbReference>
<dbReference type="KEGG" id="ath:AT1G63030"/>
<dbReference type="Araport" id="AT1G63030"/>
<dbReference type="TAIR" id="AT1G63030">
    <property type="gene designation" value="DDF2"/>
</dbReference>
<dbReference type="eggNOG" id="ENOG502RY2A">
    <property type="taxonomic scope" value="Eukaryota"/>
</dbReference>
<dbReference type="HOGENOM" id="CLU_063331_1_0_1"/>
<dbReference type="InParanoid" id="Q9SGJ6"/>
<dbReference type="OMA" id="MEAPLMS"/>
<dbReference type="PhylomeDB" id="Q9SGJ6"/>
<dbReference type="PRO" id="PR:Q9SGJ6"/>
<dbReference type="Proteomes" id="UP000006548">
    <property type="component" value="Chromosome 1"/>
</dbReference>
<dbReference type="ExpressionAtlas" id="Q9SGJ6">
    <property type="expression patterns" value="baseline and differential"/>
</dbReference>
<dbReference type="GO" id="GO:0005634">
    <property type="term" value="C:nucleus"/>
    <property type="evidence" value="ECO:0007669"/>
    <property type="project" value="UniProtKB-SubCell"/>
</dbReference>
<dbReference type="GO" id="GO:0003677">
    <property type="term" value="F:DNA binding"/>
    <property type="evidence" value="ECO:0007669"/>
    <property type="project" value="UniProtKB-KW"/>
</dbReference>
<dbReference type="GO" id="GO:0003700">
    <property type="term" value="F:DNA-binding transcription factor activity"/>
    <property type="evidence" value="ECO:0000250"/>
    <property type="project" value="TAIR"/>
</dbReference>
<dbReference type="GO" id="GO:0010371">
    <property type="term" value="P:regulation of gibberellin biosynthetic process"/>
    <property type="evidence" value="ECO:0000315"/>
    <property type="project" value="TAIR"/>
</dbReference>
<dbReference type="GO" id="GO:0048510">
    <property type="term" value="P:regulation of timing of transition from vegetative to reproductive phase"/>
    <property type="evidence" value="ECO:0000315"/>
    <property type="project" value="TAIR"/>
</dbReference>
<dbReference type="CDD" id="cd00018">
    <property type="entry name" value="AP2"/>
    <property type="match status" value="1"/>
</dbReference>
<dbReference type="FunFam" id="3.30.730.10:FF:000001">
    <property type="entry name" value="Ethylene-responsive transcription factor 2"/>
    <property type="match status" value="1"/>
</dbReference>
<dbReference type="Gene3D" id="3.30.730.10">
    <property type="entry name" value="AP2/ERF domain"/>
    <property type="match status" value="1"/>
</dbReference>
<dbReference type="InterPro" id="IPR001471">
    <property type="entry name" value="AP2/ERF_dom"/>
</dbReference>
<dbReference type="InterPro" id="IPR036955">
    <property type="entry name" value="AP2/ERF_dom_sf"/>
</dbReference>
<dbReference type="InterPro" id="IPR016177">
    <property type="entry name" value="DNA-bd_dom_sf"/>
</dbReference>
<dbReference type="InterPro" id="IPR045277">
    <property type="entry name" value="DRE1A-I"/>
</dbReference>
<dbReference type="PANTHER" id="PTHR31839">
    <property type="entry name" value="DEHYDRATION-RESPONSIVE ELEMENT-BINDING PROTEIN 1D"/>
    <property type="match status" value="1"/>
</dbReference>
<dbReference type="PANTHER" id="PTHR31839:SF27">
    <property type="entry name" value="DEHYDRATION-RESPONSIVE ELEMENT-BINDING PROTEIN 1E"/>
    <property type="match status" value="1"/>
</dbReference>
<dbReference type="Pfam" id="PF00847">
    <property type="entry name" value="AP2"/>
    <property type="match status" value="1"/>
</dbReference>
<dbReference type="PRINTS" id="PR00367">
    <property type="entry name" value="ETHRSPELEMNT"/>
</dbReference>
<dbReference type="SMART" id="SM00380">
    <property type="entry name" value="AP2"/>
    <property type="match status" value="1"/>
</dbReference>
<dbReference type="SUPFAM" id="SSF54171">
    <property type="entry name" value="DNA-binding domain"/>
    <property type="match status" value="1"/>
</dbReference>
<dbReference type="PROSITE" id="PS51032">
    <property type="entry name" value="AP2_ERF"/>
    <property type="match status" value="1"/>
</dbReference>
<comment type="function">
    <text evidence="3">Transcriptional activator that binds specifically to the DNA sequence 5'-[AG]CCGAC-3'. Binding to the C-repeat/DRE element mediates cold or dehydration-inducible transcription. CBF/DREB1 factors play a key role in freezing tolerance and cold acclimation.</text>
</comment>
<comment type="subcellular location">
    <subcellularLocation>
        <location evidence="4">Nucleus</location>
    </subcellularLocation>
</comment>
<comment type="similarity">
    <text evidence="4">Belongs to the AP2/ERF transcription factor family. ERF subfamily.</text>
</comment>
<keyword id="KW-0010">Activator</keyword>
<keyword id="KW-0238">DNA-binding</keyword>
<keyword id="KW-0539">Nucleus</keyword>
<keyword id="KW-1185">Reference proteome</keyword>
<keyword id="KW-0804">Transcription</keyword>
<keyword id="KW-0805">Transcription regulation</keyword>
<reference key="1">
    <citation type="submission" date="2004-02" db="EMBL/GenBank/DDBJ databases">
        <title>Molecular cloning, expression, phylogenetic and functional characterization of the Arabidopsis AP2/EREBP transcription factor family.</title>
        <authorList>
            <person name="Pan Y."/>
            <person name="Gong W."/>
            <person name="Liu D."/>
            <person name="Fu Q."/>
            <person name="Mei W.-Q."/>
            <person name="Song W.-Q."/>
            <person name="Ma L.-G."/>
            <person name="Luo J.-C."/>
            <person name="Deng X.-W."/>
            <person name="Zhu Y.-X."/>
        </authorList>
    </citation>
    <scope>NUCLEOTIDE SEQUENCE [MRNA]</scope>
</reference>
<reference key="2">
    <citation type="journal article" date="2000" name="Nature">
        <title>Sequence and analysis of chromosome 1 of the plant Arabidopsis thaliana.</title>
        <authorList>
            <person name="Theologis A."/>
            <person name="Ecker J.R."/>
            <person name="Palm C.J."/>
            <person name="Federspiel N.A."/>
            <person name="Kaul S."/>
            <person name="White O."/>
            <person name="Alonso J."/>
            <person name="Altafi H."/>
            <person name="Araujo R."/>
            <person name="Bowman C.L."/>
            <person name="Brooks S.Y."/>
            <person name="Buehler E."/>
            <person name="Chan A."/>
            <person name="Chao Q."/>
            <person name="Chen H."/>
            <person name="Cheuk R.F."/>
            <person name="Chin C.W."/>
            <person name="Chung M.K."/>
            <person name="Conn L."/>
            <person name="Conway A.B."/>
            <person name="Conway A.R."/>
            <person name="Creasy T.H."/>
            <person name="Dewar K."/>
            <person name="Dunn P."/>
            <person name="Etgu P."/>
            <person name="Feldblyum T.V."/>
            <person name="Feng J.-D."/>
            <person name="Fong B."/>
            <person name="Fujii C.Y."/>
            <person name="Gill J.E."/>
            <person name="Goldsmith A.D."/>
            <person name="Haas B."/>
            <person name="Hansen N.F."/>
            <person name="Hughes B."/>
            <person name="Huizar L."/>
            <person name="Hunter J.L."/>
            <person name="Jenkins J."/>
            <person name="Johnson-Hopson C."/>
            <person name="Khan S."/>
            <person name="Khaykin E."/>
            <person name="Kim C.J."/>
            <person name="Koo H.L."/>
            <person name="Kremenetskaia I."/>
            <person name="Kurtz D.B."/>
            <person name="Kwan A."/>
            <person name="Lam B."/>
            <person name="Langin-Hooper S."/>
            <person name="Lee A."/>
            <person name="Lee J.M."/>
            <person name="Lenz C.A."/>
            <person name="Li J.H."/>
            <person name="Li Y.-P."/>
            <person name="Lin X."/>
            <person name="Liu S.X."/>
            <person name="Liu Z.A."/>
            <person name="Luros J.S."/>
            <person name="Maiti R."/>
            <person name="Marziali A."/>
            <person name="Militscher J."/>
            <person name="Miranda M."/>
            <person name="Nguyen M."/>
            <person name="Nierman W.C."/>
            <person name="Osborne B.I."/>
            <person name="Pai G."/>
            <person name="Peterson J."/>
            <person name="Pham P.K."/>
            <person name="Rizzo M."/>
            <person name="Rooney T."/>
            <person name="Rowley D."/>
            <person name="Sakano H."/>
            <person name="Salzberg S.L."/>
            <person name="Schwartz J.R."/>
            <person name="Shinn P."/>
            <person name="Southwick A.M."/>
            <person name="Sun H."/>
            <person name="Tallon L.J."/>
            <person name="Tambunga G."/>
            <person name="Toriumi M.J."/>
            <person name="Town C.D."/>
            <person name="Utterback T."/>
            <person name="Van Aken S."/>
            <person name="Vaysberg M."/>
            <person name="Vysotskaia V.S."/>
            <person name="Walker M."/>
            <person name="Wu D."/>
            <person name="Yu G."/>
            <person name="Fraser C.M."/>
            <person name="Venter J.C."/>
            <person name="Davis R.W."/>
        </authorList>
    </citation>
    <scope>NUCLEOTIDE SEQUENCE [LARGE SCALE GENOMIC DNA]</scope>
    <source>
        <strain>cv. Columbia</strain>
    </source>
</reference>
<reference key="3">
    <citation type="journal article" date="2017" name="Plant J.">
        <title>Araport11: a complete reannotation of the Arabidopsis thaliana reference genome.</title>
        <authorList>
            <person name="Cheng C.Y."/>
            <person name="Krishnakumar V."/>
            <person name="Chan A.P."/>
            <person name="Thibaud-Nissen F."/>
            <person name="Schobel S."/>
            <person name="Town C.D."/>
        </authorList>
    </citation>
    <scope>GENOME REANNOTATION</scope>
    <source>
        <strain>cv. Columbia</strain>
    </source>
</reference>
<reference key="4">
    <citation type="submission" date="2004-09" db="EMBL/GenBank/DDBJ databases">
        <title>Large-scale analysis of RIKEN Arabidopsis full-length (RAFL) cDNAs.</title>
        <authorList>
            <person name="Totoki Y."/>
            <person name="Seki M."/>
            <person name="Ishida J."/>
            <person name="Nakajima M."/>
            <person name="Enju A."/>
            <person name="Kamiya A."/>
            <person name="Narusaka M."/>
            <person name="Shin-i T."/>
            <person name="Nakagawa M."/>
            <person name="Sakamoto N."/>
            <person name="Oishi K."/>
            <person name="Kohara Y."/>
            <person name="Kobayashi M."/>
            <person name="Toyoda A."/>
            <person name="Sakaki Y."/>
            <person name="Sakurai T."/>
            <person name="Iida K."/>
            <person name="Akiyama K."/>
            <person name="Satou M."/>
            <person name="Toyoda T."/>
            <person name="Konagaya A."/>
            <person name="Carninci P."/>
            <person name="Kawai J."/>
            <person name="Hayashizaki Y."/>
            <person name="Shinozaki K."/>
        </authorList>
    </citation>
    <scope>NUCLEOTIDE SEQUENCE [LARGE SCALE MRNA]</scope>
    <source>
        <strain>cv. Columbia</strain>
    </source>
</reference>
<reference key="5">
    <citation type="submission" date="2006-06" db="EMBL/GenBank/DDBJ databases">
        <title>Arabidopsis ORF clones.</title>
        <authorList>
            <person name="Kim C.J."/>
            <person name="Chen H."/>
            <person name="Quinitio C."/>
            <person name="Shinn P."/>
            <person name="Ecker J.R."/>
        </authorList>
    </citation>
    <scope>NUCLEOTIDE SEQUENCE [LARGE SCALE MRNA]</scope>
    <source>
        <strain>cv. Columbia</strain>
    </source>
</reference>
<reference key="6">
    <citation type="journal article" date="2002" name="Biochem. Biophys. Res. Commun.">
        <title>DNA-binding specificity of the ERF/AP2 domain of Arabidopsis DREBs, transcription factors involved in dehydration- and cold-inducible gene expression.</title>
        <authorList>
            <person name="Sakuma Y."/>
            <person name="Liu Q."/>
            <person name="Dubouzet J.G."/>
            <person name="Abe H."/>
            <person name="Shinozaki K."/>
            <person name="Yamaguchi-Shinozaki K."/>
        </authorList>
    </citation>
    <scope>GENE FAMILY</scope>
    <scope>FUNCTION</scope>
</reference>
<reference key="7">
    <citation type="journal article" date="2006" name="Plant Physiol.">
        <title>Genome-wide analysis of the ERF gene family in Arabidopsis and rice.</title>
        <authorList>
            <person name="Nakano T."/>
            <person name="Suzuki K."/>
            <person name="Fujimura T."/>
            <person name="Shinshi H."/>
        </authorList>
    </citation>
    <scope>GENE FAMILY</scope>
    <scope>NOMENCLATURE</scope>
</reference>